<evidence type="ECO:0000255" key="1">
    <source>
        <dbReference type="HAMAP-Rule" id="MF_01416"/>
    </source>
</evidence>
<protein>
    <recommendedName>
        <fullName evidence="1">ATP synthase subunit delta</fullName>
    </recommendedName>
    <alternativeName>
        <fullName evidence="1">ATP synthase F(1) sector subunit delta</fullName>
    </alternativeName>
    <alternativeName>
        <fullName evidence="1">F-type ATPase subunit delta</fullName>
        <shortName evidence="1">F-ATPase subunit delta</shortName>
    </alternativeName>
</protein>
<sequence>MMYSAIASKYALALYNISKTNGKTETYKELLNILGDIYNLASVYLNNQAIKPENRVQFVLNIMKELKIEYDEIFRKFINLLIVNKRLKYINQIISFFDYTILEDKGLIPVNVTSAMELSKEEEEILSKFVEKYTNRKPVFNVTVDDSLIAGVVVEFAGKTLDVTVKGRLQNIARNILNREG</sequence>
<feature type="chain" id="PRO_0000382099" description="ATP synthase subunit delta">
    <location>
        <begin position="1"/>
        <end position="181"/>
    </location>
</feature>
<keyword id="KW-0066">ATP synthesis</keyword>
<keyword id="KW-0997">Cell inner membrane</keyword>
<keyword id="KW-1003">Cell membrane</keyword>
<keyword id="KW-0139">CF(1)</keyword>
<keyword id="KW-0375">Hydrogen ion transport</keyword>
<keyword id="KW-0406">Ion transport</keyword>
<keyword id="KW-0472">Membrane</keyword>
<keyword id="KW-1185">Reference proteome</keyword>
<keyword id="KW-0813">Transport</keyword>
<accession>A7HJW0</accession>
<dbReference type="EMBL" id="CP000771">
    <property type="protein sequence ID" value="ABS60193.1"/>
    <property type="molecule type" value="Genomic_DNA"/>
</dbReference>
<dbReference type="RefSeq" id="WP_011993514.1">
    <property type="nucleotide sequence ID" value="NC_009718.1"/>
</dbReference>
<dbReference type="SMR" id="A7HJW0"/>
<dbReference type="STRING" id="381764.Fnod_0328"/>
<dbReference type="KEGG" id="fno:Fnod_0328"/>
<dbReference type="eggNOG" id="COG0712">
    <property type="taxonomic scope" value="Bacteria"/>
</dbReference>
<dbReference type="HOGENOM" id="CLU_085114_4_0_0"/>
<dbReference type="OrthoDB" id="9802471at2"/>
<dbReference type="Proteomes" id="UP000002415">
    <property type="component" value="Chromosome"/>
</dbReference>
<dbReference type="GO" id="GO:0005886">
    <property type="term" value="C:plasma membrane"/>
    <property type="evidence" value="ECO:0007669"/>
    <property type="project" value="UniProtKB-SubCell"/>
</dbReference>
<dbReference type="GO" id="GO:0045259">
    <property type="term" value="C:proton-transporting ATP synthase complex"/>
    <property type="evidence" value="ECO:0007669"/>
    <property type="project" value="UniProtKB-KW"/>
</dbReference>
<dbReference type="GO" id="GO:0046933">
    <property type="term" value="F:proton-transporting ATP synthase activity, rotational mechanism"/>
    <property type="evidence" value="ECO:0007669"/>
    <property type="project" value="UniProtKB-UniRule"/>
</dbReference>
<dbReference type="Gene3D" id="1.10.520.20">
    <property type="entry name" value="N-terminal domain of the delta subunit of the F1F0-ATP synthase"/>
    <property type="match status" value="1"/>
</dbReference>
<dbReference type="HAMAP" id="MF_01416">
    <property type="entry name" value="ATP_synth_delta_bact"/>
    <property type="match status" value="1"/>
</dbReference>
<dbReference type="InterPro" id="IPR026015">
    <property type="entry name" value="ATP_synth_OSCP/delta_N_sf"/>
</dbReference>
<dbReference type="InterPro" id="IPR000711">
    <property type="entry name" value="ATPase_OSCP/dsu"/>
</dbReference>
<dbReference type="NCBIfam" id="TIGR01145">
    <property type="entry name" value="ATP_synt_delta"/>
    <property type="match status" value="1"/>
</dbReference>
<dbReference type="NCBIfam" id="NF009976">
    <property type="entry name" value="PRK13441.1"/>
    <property type="match status" value="1"/>
</dbReference>
<dbReference type="PANTHER" id="PTHR11910">
    <property type="entry name" value="ATP SYNTHASE DELTA CHAIN"/>
    <property type="match status" value="1"/>
</dbReference>
<dbReference type="Pfam" id="PF00213">
    <property type="entry name" value="OSCP"/>
    <property type="match status" value="1"/>
</dbReference>
<dbReference type="PRINTS" id="PR00125">
    <property type="entry name" value="ATPASEDELTA"/>
</dbReference>
<dbReference type="SUPFAM" id="SSF47928">
    <property type="entry name" value="N-terminal domain of the delta subunit of the F1F0-ATP synthase"/>
    <property type="match status" value="1"/>
</dbReference>
<organism>
    <name type="scientific">Fervidobacterium nodosum (strain ATCC 35602 / DSM 5306 / Rt17-B1)</name>
    <dbReference type="NCBI Taxonomy" id="381764"/>
    <lineage>
        <taxon>Bacteria</taxon>
        <taxon>Thermotogati</taxon>
        <taxon>Thermotogota</taxon>
        <taxon>Thermotogae</taxon>
        <taxon>Thermotogales</taxon>
        <taxon>Fervidobacteriaceae</taxon>
        <taxon>Fervidobacterium</taxon>
    </lineage>
</organism>
<name>ATPD_FERNB</name>
<comment type="function">
    <text evidence="1">F(1)F(0) ATP synthase produces ATP from ADP in the presence of a proton or sodium gradient. F-type ATPases consist of two structural domains, F(1) containing the extramembraneous catalytic core and F(0) containing the membrane proton channel, linked together by a central stalk and a peripheral stalk. During catalysis, ATP synthesis in the catalytic domain of F(1) is coupled via a rotary mechanism of the central stalk subunits to proton translocation.</text>
</comment>
<comment type="function">
    <text evidence="1">This protein is part of the stalk that links CF(0) to CF(1). It either transmits conformational changes from CF(0) to CF(1) or is implicated in proton conduction.</text>
</comment>
<comment type="subunit">
    <text evidence="1">F-type ATPases have 2 components, F(1) - the catalytic core - and F(0) - the membrane proton channel. F(1) has five subunits: alpha(3), beta(3), gamma(1), delta(1), epsilon(1). F(0) has three main subunits: a(1), b(2) and c(10-14). The alpha and beta chains form an alternating ring which encloses part of the gamma chain. F(1) is attached to F(0) by a central stalk formed by the gamma and epsilon chains, while a peripheral stalk is formed by the delta and b chains.</text>
</comment>
<comment type="subcellular location">
    <subcellularLocation>
        <location evidence="1">Cell inner membrane</location>
        <topology evidence="1">Peripheral membrane protein</topology>
    </subcellularLocation>
</comment>
<comment type="similarity">
    <text evidence="1">Belongs to the ATPase delta chain family.</text>
</comment>
<gene>
    <name evidence="1" type="primary">atpH</name>
    <name type="ordered locus">Fnod_0328</name>
</gene>
<proteinExistence type="inferred from homology"/>
<reference key="1">
    <citation type="submission" date="2007-07" db="EMBL/GenBank/DDBJ databases">
        <title>Complete sequence of Fervidobacterium nodosum Rt17-B1.</title>
        <authorList>
            <consortium name="US DOE Joint Genome Institute"/>
            <person name="Copeland A."/>
            <person name="Lucas S."/>
            <person name="Lapidus A."/>
            <person name="Barry K."/>
            <person name="Glavina del Rio T."/>
            <person name="Dalin E."/>
            <person name="Tice H."/>
            <person name="Pitluck S."/>
            <person name="Saunders E."/>
            <person name="Brettin T."/>
            <person name="Bruce D."/>
            <person name="Detter J.C."/>
            <person name="Han C."/>
            <person name="Schmutz J."/>
            <person name="Larimer F."/>
            <person name="Land M."/>
            <person name="Hauser L."/>
            <person name="Kyrpides N."/>
            <person name="Mikhailova N."/>
            <person name="Nelson K."/>
            <person name="Gogarten J.P."/>
            <person name="Noll K."/>
            <person name="Richardson P."/>
        </authorList>
    </citation>
    <scope>NUCLEOTIDE SEQUENCE [LARGE SCALE GENOMIC DNA]</scope>
    <source>
        <strain>ATCC 35602 / DSM 5306 / Rt17-B1</strain>
    </source>
</reference>